<gene>
    <name type="primary">ACTB</name>
</gene>
<sequence>MDDDIAALVVDNGSGMCKAGFAGDDAPRAVFPSIVGRPRHQGVMVGMGQKDSYVGDEAQSKRGILTLKYPIEHGIVTNWDDMEKIWHHTFYNELRVAPEEHPVLLTEAPLNPKANREKMTQIMFETFNTPAMYVAIQAVLSLYASGRTTGIVMDSGDGVTHTVPIYEGYALPHAILRLDLAGRDLTDYLMKILTERGYSFTTTAEREIVRDIKEKLCYVALDFEQEMATAASSSSLEKSYELPDGQVITIGNERFRCPEALFQPSFLGMESCGIHETTFNSIMKCDVDIRKDLYANTVLSGGTTMYPGIADRMQKEITALAPSTMKIKIIAPPERKYSVWIGGSILASLSTFQQMWISKQEYDESGPSIVHRKCF</sequence>
<comment type="function">
    <text evidence="2 5">Actin is a highly conserved protein that polymerizes to produce filaments that form cross-linked networks in the cytoplasm of cells (By similarity). Actin exists in both monomeric (G-actin) and polymeric (F-actin) forms, both forms playing key functions, such as cell motility and contraction (By similarity). In addition to their role in the cytoplasmic cytoskeleton, G- and F-actin also localize in the nucleus, and regulate gene transcription and motility and repair of damaged DNA (By similarity). Plays a role in the assembly of the gamma-tubulin ring complex (gTuRC), which regulates the minus-end nucleation of alpha-beta tubulin heterodimers that grow into microtubule protafilaments (By similarity). Part of the ACTR1A/ACTB filament around which the dynactin complex is built (By similarity). The dynactin multiprotein complex activates the molecular motor dynein for ultra-processive transport along microtubules (By similarity).</text>
</comment>
<comment type="catalytic activity">
    <reaction evidence="4">
        <text>ATP + H2O = ADP + phosphate + H(+)</text>
        <dbReference type="Rhea" id="RHEA:13065"/>
        <dbReference type="ChEBI" id="CHEBI:15377"/>
        <dbReference type="ChEBI" id="CHEBI:15378"/>
        <dbReference type="ChEBI" id="CHEBI:30616"/>
        <dbReference type="ChEBI" id="CHEBI:43474"/>
        <dbReference type="ChEBI" id="CHEBI:456216"/>
    </reaction>
</comment>
<comment type="subunit">
    <text evidence="1 2 3 5">Polymerization of globular actin (G-actin) leads to a structural filament (F-actin) in the form of a two-stranded helix (By similarity). Each actin can bind to 4 others (By similarity). Identified in a IGF2BP1-dependent mRNP granule complex containing untranslated mRNAs (By similarity). Component of the BAF complex, which includes at least actin (ACTB), ARID1A, ARID1B/BAF250, SMARCA2, SMARCA4/BRG1, ACTL6A/BAF53, ACTL6B/BAF53B, SMARCE1/BAF57 SMARCC1/BAF155, SMARCC2/BAF170, SMARCB1/SNF5/INI1, and one or more of SMARCD1/BAF60A, SMARCD2/BAF60B, or SMARCD3/BAF60C (By similarity). In muscle cells, the BAF complex also contains DPF3 (By similarity). Found in a complex with XPO6, Ran, ACTB and PFN1 (By similarity). Interacts with PFN1 (By similarity). Interacts with XPO6 and EMD (By similarity). Interacts with ERBB2 (By similarity). Interacts with GCSAM (By similarity). Interacts with TBC1D21 (By similarity). Interacts with CPNE1 (via VWFA domain) and CPNE4 (via VWFA domain) (By similarity). Interacts with DHX9 (via C-terminus); this interaction is direct and mediates the attachment to nuclear ribonucleoprotein complexes (By similarity). Interacts with FAM107A (By similarity). Associates with the gamma-tubulin ring complex (gTuRC) consisting of TUBGCP2, TUBGCP3, TUBGCP4, TUBGCP5 and TUBGCP6 and gamma-tubulin TUBG1 or TUBG2; within the complex, interacts with TUBGCP3 and TUBGCP6 to form a luminal bridge with MZT1 that stabilizes the initial structure during complex assembly (By similarity). Part of the ACTR1A/ACTB filament around which the dynactin complex is built (By similarity). The filament contains 8 copies of ACTR1A and 1 ACTB (By similarity). Interacts with TPRN which forms ring-like structures in the stereocilium taper region; the interaction may stabilize stereocilia in inner ear hair cells (By similarity). Interacts with AMOTL2 (via N-terminus), the interaction facilitates binding of cell junction complexes to actin fibers in endothelial cells (By similarity).</text>
</comment>
<comment type="subcellular location">
    <subcellularLocation>
        <location evidence="2">Cytoplasm</location>
        <location evidence="2">Cytoskeleton</location>
    </subcellularLocation>
    <subcellularLocation>
        <location evidence="2">Nucleus</location>
    </subcellularLocation>
    <text evidence="2">Localized in cytoplasmic mRNP granules containing untranslated mRNAs.</text>
</comment>
<comment type="PTM">
    <molecule>Actin, cytoplasmic 1</molecule>
    <text evidence="2">N-terminal cleavage of acetylated methionine of immature cytoplasmic actin by ACTMAP.</text>
</comment>
<comment type="PTM">
    <text evidence="2">ISGylated.</text>
</comment>
<comment type="PTM">
    <text evidence="3">Oxidation of Met-44 and Met-47 by MICALs (MICAL1, MICAL2 or MICAL3) to form methionine sulfoxide promotes actin filament depolymerization. MICAL1 and MICAL2 produce the (R)-S-oxide form. The (R)-S-oxide form is reverted by MSRB1 and MSRB2, which promote actin repolymerization.</text>
</comment>
<comment type="PTM">
    <text evidence="2">Monomethylation at Lys-84 (K84me1) regulates actin-myosin interaction and actomyosin-dependent processes. Demethylation by ALKBH4 is required for maintaining actomyosin dynamics supporting normal cleavage furrow ingression during cytokinesis and cell migration.</text>
</comment>
<comment type="PTM">
    <molecule>Actin, cytoplasmic 1, N-terminally processed</molecule>
    <text evidence="2">N-terminal acetylation by NAA80 affects actin filament depolymerization and elongation, including elongation driven by formins. In contrast, filament nucleation by the Arp2/3 complex is not affected.</text>
</comment>
<comment type="PTM">
    <text evidence="2 3">Methylated at His-73 by SETD3 (By similarity). Methylation at His-73 is required for smooth muscle contraction of the laboring uterus during delivery (By similarity).</text>
</comment>
<comment type="miscellaneous">
    <text evidence="2">In vertebrates 3 main groups of actin isoforms, alpha, beta and gamma have been identified. The alpha actins are found in muscle tissues and are a major constituent of the contractile apparatus. The beta and gamma actins coexist in most cell types as components of the cytoskeleton and as mediators of internal cell motility.</text>
</comment>
<comment type="similarity">
    <text evidence="6">Belongs to the actin family.</text>
</comment>
<reference key="1">
    <citation type="submission" date="1997-06" db="EMBL/GenBank/DDBJ databases">
        <authorList>
            <person name="Rothwell M.C."/>
            <person name="Miller W.L."/>
        </authorList>
    </citation>
    <scope>NUCLEOTIDE SEQUENCE [MRNA]</scope>
</reference>
<feature type="chain" id="PRO_0000000783" description="Actin, cytoplasmic 1">
    <location>
        <begin position="1"/>
        <end position="375"/>
    </location>
</feature>
<feature type="initiator methionine" description="Removed; alternate" evidence="2">
    <location>
        <position position="1"/>
    </location>
</feature>
<feature type="chain" id="PRO_0000367082" description="Actin, cytoplasmic 1, N-terminally processed">
    <location>
        <begin position="2"/>
        <end position="375"/>
    </location>
</feature>
<feature type="modified residue" description="N-acetylmethionine" evidence="2">
    <location>
        <position position="1"/>
    </location>
</feature>
<feature type="modified residue" description="N-acetylaspartate; in Actin, cytoplasmic 1, N-terminally processed" evidence="2">
    <location>
        <position position="2"/>
    </location>
</feature>
<feature type="modified residue" description="Methionine (R)-sulfoxide" evidence="3">
    <location>
        <position position="44"/>
    </location>
</feature>
<feature type="modified residue" description="Methionine (R)-sulfoxide" evidence="3">
    <location>
        <position position="47"/>
    </location>
</feature>
<feature type="modified residue" description="Tele-methylhistidine" evidence="3">
    <location>
        <position position="73"/>
    </location>
</feature>
<feature type="modified residue" description="N6-methyllysine" evidence="2">
    <location>
        <position position="84"/>
    </location>
</feature>
<dbReference type="EC" id="3.6.4.-" evidence="4"/>
<dbReference type="EMBL" id="U39357">
    <property type="protein sequence ID" value="AAB60717.1"/>
    <property type="molecule type" value="mRNA"/>
</dbReference>
<dbReference type="RefSeq" id="NP_001009784.1">
    <property type="nucleotide sequence ID" value="NM_001009784.3"/>
</dbReference>
<dbReference type="SMR" id="P60713"/>
<dbReference type="STRING" id="9940.ENSOARP00000019868"/>
<dbReference type="PaxDb" id="9940-ENSOARP00000019868"/>
<dbReference type="Ensembl" id="ENSOART00040021073">
    <property type="protein sequence ID" value="ENSOARP00040010266"/>
    <property type="gene ID" value="ENSOARG00040012985"/>
</dbReference>
<dbReference type="Ensembl" id="ENSOART00180037185">
    <property type="protein sequence ID" value="ENSOARP00180019199"/>
    <property type="gene ID" value="ENSOARG00180022443"/>
</dbReference>
<dbReference type="Ensembl" id="ENSOART00185039443">
    <property type="protein sequence ID" value="ENSOARP00185019318"/>
    <property type="gene ID" value="ENSOARG00185023855"/>
</dbReference>
<dbReference type="Ensembl" id="ENSOART00215050537">
    <property type="protein sequence ID" value="ENSOARP00215026361"/>
    <property type="gene ID" value="ENSOARG00215030140"/>
</dbReference>
<dbReference type="Ensembl" id="ENSOART00225015338">
    <property type="protein sequence ID" value="ENSOARP00225007363"/>
    <property type="gene ID" value="ENSOARG00225009314"/>
</dbReference>
<dbReference type="GeneID" id="443052"/>
<dbReference type="KEGG" id="oas:443052"/>
<dbReference type="CTD" id="60"/>
<dbReference type="eggNOG" id="KOG0676">
    <property type="taxonomic scope" value="Eukaryota"/>
</dbReference>
<dbReference type="OrthoDB" id="9816604at2759"/>
<dbReference type="Proteomes" id="UP000002356">
    <property type="component" value="Unplaced"/>
</dbReference>
<dbReference type="GO" id="GO:0015629">
    <property type="term" value="C:actin cytoskeleton"/>
    <property type="evidence" value="ECO:0000250"/>
    <property type="project" value="UniProtKB"/>
</dbReference>
<dbReference type="GO" id="GO:0005856">
    <property type="term" value="C:cytoskeleton"/>
    <property type="evidence" value="ECO:0000250"/>
    <property type="project" value="AgBase"/>
</dbReference>
<dbReference type="GO" id="GO:0097433">
    <property type="term" value="C:dense body"/>
    <property type="evidence" value="ECO:0000250"/>
    <property type="project" value="AgBase"/>
</dbReference>
<dbReference type="GO" id="GO:0005925">
    <property type="term" value="C:focal adhesion"/>
    <property type="evidence" value="ECO:0000250"/>
    <property type="project" value="AgBase"/>
</dbReference>
<dbReference type="GO" id="GO:0005634">
    <property type="term" value="C:nucleus"/>
    <property type="evidence" value="ECO:0000250"/>
    <property type="project" value="UniProtKB"/>
</dbReference>
<dbReference type="GO" id="GO:0005886">
    <property type="term" value="C:plasma membrane"/>
    <property type="evidence" value="ECO:0000250"/>
    <property type="project" value="AgBase"/>
</dbReference>
<dbReference type="GO" id="GO:0032991">
    <property type="term" value="C:protein-containing complex"/>
    <property type="evidence" value="ECO:0000250"/>
    <property type="project" value="UniProtKB"/>
</dbReference>
<dbReference type="GO" id="GO:0005524">
    <property type="term" value="F:ATP binding"/>
    <property type="evidence" value="ECO:0007669"/>
    <property type="project" value="UniProtKB-KW"/>
</dbReference>
<dbReference type="GO" id="GO:0016787">
    <property type="term" value="F:hydrolase activity"/>
    <property type="evidence" value="ECO:0007669"/>
    <property type="project" value="UniProtKB-KW"/>
</dbReference>
<dbReference type="CDD" id="cd10224">
    <property type="entry name" value="ASKHA_NBD_actin"/>
    <property type="match status" value="1"/>
</dbReference>
<dbReference type="FunFam" id="3.30.420.40:FF:000131">
    <property type="entry name" value="Actin, alpha skeletal muscle"/>
    <property type="match status" value="1"/>
</dbReference>
<dbReference type="FunFam" id="3.30.420.40:FF:000291">
    <property type="entry name" value="Actin, alpha skeletal muscle"/>
    <property type="match status" value="1"/>
</dbReference>
<dbReference type="FunFam" id="3.90.640.10:FF:000047">
    <property type="entry name" value="Actin, alpha skeletal muscle"/>
    <property type="match status" value="1"/>
</dbReference>
<dbReference type="FunFam" id="3.30.420.40:FF:000058">
    <property type="entry name" value="Putative actin-related protein 5"/>
    <property type="match status" value="1"/>
</dbReference>
<dbReference type="Gene3D" id="3.30.420.40">
    <property type="match status" value="2"/>
</dbReference>
<dbReference type="Gene3D" id="3.90.640.10">
    <property type="entry name" value="Actin, Chain A, domain 4"/>
    <property type="match status" value="1"/>
</dbReference>
<dbReference type="InterPro" id="IPR004000">
    <property type="entry name" value="Actin"/>
</dbReference>
<dbReference type="InterPro" id="IPR020902">
    <property type="entry name" value="Actin/actin-like_CS"/>
</dbReference>
<dbReference type="InterPro" id="IPR004001">
    <property type="entry name" value="Actin_CS"/>
</dbReference>
<dbReference type="InterPro" id="IPR043129">
    <property type="entry name" value="ATPase_NBD"/>
</dbReference>
<dbReference type="PANTHER" id="PTHR11937">
    <property type="entry name" value="ACTIN"/>
    <property type="match status" value="1"/>
</dbReference>
<dbReference type="Pfam" id="PF00022">
    <property type="entry name" value="Actin"/>
    <property type="match status" value="1"/>
</dbReference>
<dbReference type="PRINTS" id="PR00190">
    <property type="entry name" value="ACTIN"/>
</dbReference>
<dbReference type="SMART" id="SM00268">
    <property type="entry name" value="ACTIN"/>
    <property type="match status" value="1"/>
</dbReference>
<dbReference type="SUPFAM" id="SSF53067">
    <property type="entry name" value="Actin-like ATPase domain"/>
    <property type="match status" value="2"/>
</dbReference>
<dbReference type="PROSITE" id="PS00406">
    <property type="entry name" value="ACTINS_1"/>
    <property type="match status" value="1"/>
</dbReference>
<dbReference type="PROSITE" id="PS00432">
    <property type="entry name" value="ACTINS_2"/>
    <property type="match status" value="1"/>
</dbReference>
<dbReference type="PROSITE" id="PS01132">
    <property type="entry name" value="ACTINS_ACT_LIKE"/>
    <property type="match status" value="1"/>
</dbReference>
<accession>P60713</accession>
<accession>P02570</accession>
<accession>P70514</accession>
<accession>P99021</accession>
<accession>Q11211</accession>
<accession>Q64316</accession>
<keyword id="KW-0007">Acetylation</keyword>
<keyword id="KW-0067">ATP-binding</keyword>
<keyword id="KW-0963">Cytoplasm</keyword>
<keyword id="KW-0206">Cytoskeleton</keyword>
<keyword id="KW-0378">Hydrolase</keyword>
<keyword id="KW-0488">Methylation</keyword>
<keyword id="KW-0547">Nucleotide-binding</keyword>
<keyword id="KW-0539">Nucleus</keyword>
<keyword id="KW-0558">Oxidation</keyword>
<keyword id="KW-1185">Reference proteome</keyword>
<keyword id="KW-0832">Ubl conjugation</keyword>
<protein>
    <recommendedName>
        <fullName>Actin, cytoplasmic 1</fullName>
        <ecNumber evidence="4">3.6.4.-</ecNumber>
    </recommendedName>
    <alternativeName>
        <fullName>Beta-actin</fullName>
    </alternativeName>
    <component>
        <recommendedName>
            <fullName>Actin, cytoplasmic 1, N-terminally processed</fullName>
        </recommendedName>
    </component>
</protein>
<organism>
    <name type="scientific">Ovis aries</name>
    <name type="common">Sheep</name>
    <dbReference type="NCBI Taxonomy" id="9940"/>
    <lineage>
        <taxon>Eukaryota</taxon>
        <taxon>Metazoa</taxon>
        <taxon>Chordata</taxon>
        <taxon>Craniata</taxon>
        <taxon>Vertebrata</taxon>
        <taxon>Euteleostomi</taxon>
        <taxon>Mammalia</taxon>
        <taxon>Eutheria</taxon>
        <taxon>Laurasiatheria</taxon>
        <taxon>Artiodactyla</taxon>
        <taxon>Ruminantia</taxon>
        <taxon>Pecora</taxon>
        <taxon>Bovidae</taxon>
        <taxon>Caprinae</taxon>
        <taxon>Ovis</taxon>
    </lineage>
</organism>
<name>ACTB_SHEEP</name>
<proteinExistence type="evidence at transcript level"/>
<evidence type="ECO:0000250" key="1">
    <source>
        <dbReference type="UniProtKB" id="O18840"/>
    </source>
</evidence>
<evidence type="ECO:0000250" key="2">
    <source>
        <dbReference type="UniProtKB" id="P60709"/>
    </source>
</evidence>
<evidence type="ECO:0000250" key="3">
    <source>
        <dbReference type="UniProtKB" id="P60710"/>
    </source>
</evidence>
<evidence type="ECO:0000250" key="4">
    <source>
        <dbReference type="UniProtKB" id="P68137"/>
    </source>
</evidence>
<evidence type="ECO:0000250" key="5">
    <source>
        <dbReference type="UniProtKB" id="Q6QAQ1"/>
    </source>
</evidence>
<evidence type="ECO:0000305" key="6"/>